<accession>A8GDA1</accession>
<sequence>MPIRKVSLLRLIPLASLVLAACTTTKPTGPATSPTSPQWRAHEQAVQQLSQYQTRGSFAYLSDQKKVYARFFWQQYSPDRYRLLLTNPLGSTELDLNVQKNVVQLTDNQGKRYVSDNAEEMIRKLTGMAIPLDNLRQWMLGLPGEASDFKLDDQYRLNSLTYQQGSQTWTVDYQDYNNSLKPQLPSRLELKQGDQRIKLKMDDWTLK</sequence>
<evidence type="ECO:0000255" key="1">
    <source>
        <dbReference type="HAMAP-Rule" id="MF_00233"/>
    </source>
</evidence>
<gene>
    <name evidence="1" type="primary">lolB</name>
    <name type="ordered locus">Spro_1988</name>
</gene>
<comment type="function">
    <text evidence="1">Plays a critical role in the incorporation of lipoproteins in the outer membrane after they are released by the LolA protein.</text>
</comment>
<comment type="subunit">
    <text evidence="1">Monomer.</text>
</comment>
<comment type="subcellular location">
    <subcellularLocation>
        <location evidence="1">Cell outer membrane</location>
        <topology evidence="1">Lipid-anchor</topology>
    </subcellularLocation>
</comment>
<comment type="similarity">
    <text evidence="1">Belongs to the LolB family.</text>
</comment>
<dbReference type="EMBL" id="CP000826">
    <property type="protein sequence ID" value="ABV41091.1"/>
    <property type="molecule type" value="Genomic_DNA"/>
</dbReference>
<dbReference type="SMR" id="A8GDA1"/>
<dbReference type="STRING" id="399741.Spro_1988"/>
<dbReference type="KEGG" id="spe:Spro_1988"/>
<dbReference type="eggNOG" id="COG3017">
    <property type="taxonomic scope" value="Bacteria"/>
</dbReference>
<dbReference type="HOGENOM" id="CLU_092816_1_1_6"/>
<dbReference type="OrthoDB" id="9797618at2"/>
<dbReference type="GO" id="GO:0009279">
    <property type="term" value="C:cell outer membrane"/>
    <property type="evidence" value="ECO:0007669"/>
    <property type="project" value="UniProtKB-SubCell"/>
</dbReference>
<dbReference type="GO" id="GO:0044874">
    <property type="term" value="P:lipoprotein localization to outer membrane"/>
    <property type="evidence" value="ECO:0007669"/>
    <property type="project" value="UniProtKB-UniRule"/>
</dbReference>
<dbReference type="GO" id="GO:0015031">
    <property type="term" value="P:protein transport"/>
    <property type="evidence" value="ECO:0007669"/>
    <property type="project" value="UniProtKB-KW"/>
</dbReference>
<dbReference type="CDD" id="cd16326">
    <property type="entry name" value="LolB"/>
    <property type="match status" value="1"/>
</dbReference>
<dbReference type="Gene3D" id="2.50.20.10">
    <property type="entry name" value="Lipoprotein localisation LolA/LolB/LppX"/>
    <property type="match status" value="1"/>
</dbReference>
<dbReference type="HAMAP" id="MF_00233">
    <property type="entry name" value="LolB"/>
    <property type="match status" value="1"/>
</dbReference>
<dbReference type="InterPro" id="IPR029046">
    <property type="entry name" value="LolA/LolB/LppX"/>
</dbReference>
<dbReference type="InterPro" id="IPR004565">
    <property type="entry name" value="OM_lipoprot_LolB"/>
</dbReference>
<dbReference type="NCBIfam" id="TIGR00548">
    <property type="entry name" value="lolB"/>
    <property type="match status" value="1"/>
</dbReference>
<dbReference type="Pfam" id="PF03550">
    <property type="entry name" value="LolB"/>
    <property type="match status" value="1"/>
</dbReference>
<dbReference type="SUPFAM" id="SSF89392">
    <property type="entry name" value="Prokaryotic lipoproteins and lipoprotein localization factors"/>
    <property type="match status" value="1"/>
</dbReference>
<dbReference type="PROSITE" id="PS51257">
    <property type="entry name" value="PROKAR_LIPOPROTEIN"/>
    <property type="match status" value="1"/>
</dbReference>
<name>LOLB_SERP5</name>
<organism>
    <name type="scientific">Serratia proteamaculans (strain 568)</name>
    <dbReference type="NCBI Taxonomy" id="399741"/>
    <lineage>
        <taxon>Bacteria</taxon>
        <taxon>Pseudomonadati</taxon>
        <taxon>Pseudomonadota</taxon>
        <taxon>Gammaproteobacteria</taxon>
        <taxon>Enterobacterales</taxon>
        <taxon>Yersiniaceae</taxon>
        <taxon>Serratia</taxon>
    </lineage>
</organism>
<feature type="signal peptide" evidence="1">
    <location>
        <begin position="1"/>
        <end position="21"/>
    </location>
</feature>
<feature type="chain" id="PRO_5000279305" description="Outer-membrane lipoprotein LolB">
    <location>
        <begin position="22"/>
        <end position="207"/>
    </location>
</feature>
<feature type="lipid moiety-binding region" description="N-palmitoyl cysteine" evidence="1">
    <location>
        <position position="22"/>
    </location>
</feature>
<feature type="lipid moiety-binding region" description="S-diacylglycerol cysteine" evidence="1">
    <location>
        <position position="22"/>
    </location>
</feature>
<proteinExistence type="inferred from homology"/>
<protein>
    <recommendedName>
        <fullName evidence="1">Outer-membrane lipoprotein LolB</fullName>
    </recommendedName>
</protein>
<reference key="1">
    <citation type="submission" date="2007-09" db="EMBL/GenBank/DDBJ databases">
        <title>Complete sequence of chromosome of Serratia proteamaculans 568.</title>
        <authorList>
            <consortium name="US DOE Joint Genome Institute"/>
            <person name="Copeland A."/>
            <person name="Lucas S."/>
            <person name="Lapidus A."/>
            <person name="Barry K."/>
            <person name="Glavina del Rio T."/>
            <person name="Dalin E."/>
            <person name="Tice H."/>
            <person name="Pitluck S."/>
            <person name="Chain P."/>
            <person name="Malfatti S."/>
            <person name="Shin M."/>
            <person name="Vergez L."/>
            <person name="Schmutz J."/>
            <person name="Larimer F."/>
            <person name="Land M."/>
            <person name="Hauser L."/>
            <person name="Kyrpides N."/>
            <person name="Kim E."/>
            <person name="Taghavi S."/>
            <person name="Newman L."/>
            <person name="Vangronsveld J."/>
            <person name="van der Lelie D."/>
            <person name="Richardson P."/>
        </authorList>
    </citation>
    <scope>NUCLEOTIDE SEQUENCE [LARGE SCALE GENOMIC DNA]</scope>
    <source>
        <strain>568</strain>
    </source>
</reference>
<keyword id="KW-0998">Cell outer membrane</keyword>
<keyword id="KW-0143">Chaperone</keyword>
<keyword id="KW-0449">Lipoprotein</keyword>
<keyword id="KW-0472">Membrane</keyword>
<keyword id="KW-0564">Palmitate</keyword>
<keyword id="KW-0653">Protein transport</keyword>
<keyword id="KW-0732">Signal</keyword>
<keyword id="KW-0813">Transport</keyword>